<evidence type="ECO:0000255" key="1">
    <source>
        <dbReference type="HAMAP-Rule" id="MF_01338"/>
    </source>
</evidence>
<proteinExistence type="inferred from homology"/>
<accession>P28448</accession>
<sequence length="459" mass="50997">VGFKAGVKDYKLTYYTPDYETKDTDILAAFRVTPQPGVPPEEAGAAVAAESSTGTWTTVWTDGLTSLDRYKGRCYHIESVAGEENQYIAYVAYPLDLFEEGSVTNMFTSIVGNVFGFKALRALRLEDLRIPPAYCKTFQGPPHGIQVERDKLNKYGRPLLGCTIKPKLGLSAKNYGRAVYECLRGGLDFTKDDENVNSQPFMRWRDRFLFCAEAIYKAQDETGEIKGHYLNATAGTCEEMIKRAVFARELGVPIIMHDYLTGGFTANTSLAHYCRDNGLLLHIHRAMHAVIDRQKNHGIHFRVLAKALRMSGGDHIHSGTVVGKLEGERDITLGFVDLLRDDYIEKDRARGIYFSQDWVSLPGVLPVASGGIHVWHMPALTEIFGDDSVLQFGGGTLGHPWGNAPGAVANRVALEACVQARNEGRDLAREGNEIIRRAGKWSPELAAACEVWKEIKFEF</sequence>
<name>RBL_RORGO</name>
<dbReference type="EC" id="4.1.1.39" evidence="1"/>
<dbReference type="EMBL" id="L01950">
    <property type="protein sequence ID" value="AAA84596.2"/>
    <property type="molecule type" value="Genomic_DNA"/>
</dbReference>
<dbReference type="SMR" id="P28448"/>
<dbReference type="GO" id="GO:0009507">
    <property type="term" value="C:chloroplast"/>
    <property type="evidence" value="ECO:0007669"/>
    <property type="project" value="UniProtKB-SubCell"/>
</dbReference>
<dbReference type="GO" id="GO:0000287">
    <property type="term" value="F:magnesium ion binding"/>
    <property type="evidence" value="ECO:0007669"/>
    <property type="project" value="InterPro"/>
</dbReference>
<dbReference type="GO" id="GO:0004497">
    <property type="term" value="F:monooxygenase activity"/>
    <property type="evidence" value="ECO:0007669"/>
    <property type="project" value="UniProtKB-KW"/>
</dbReference>
<dbReference type="GO" id="GO:0016984">
    <property type="term" value="F:ribulose-bisphosphate carboxylase activity"/>
    <property type="evidence" value="ECO:0007669"/>
    <property type="project" value="UniProtKB-EC"/>
</dbReference>
<dbReference type="GO" id="GO:0009853">
    <property type="term" value="P:photorespiration"/>
    <property type="evidence" value="ECO:0007669"/>
    <property type="project" value="UniProtKB-KW"/>
</dbReference>
<dbReference type="GO" id="GO:0019253">
    <property type="term" value="P:reductive pentose-phosphate cycle"/>
    <property type="evidence" value="ECO:0007669"/>
    <property type="project" value="UniProtKB-KW"/>
</dbReference>
<dbReference type="CDD" id="cd08212">
    <property type="entry name" value="RuBisCO_large_I"/>
    <property type="match status" value="1"/>
</dbReference>
<dbReference type="FunFam" id="3.20.20.110:FF:000001">
    <property type="entry name" value="Ribulose bisphosphate carboxylase large chain"/>
    <property type="match status" value="1"/>
</dbReference>
<dbReference type="FunFam" id="3.30.70.150:FF:000001">
    <property type="entry name" value="Ribulose bisphosphate carboxylase large chain"/>
    <property type="match status" value="1"/>
</dbReference>
<dbReference type="Gene3D" id="3.20.20.110">
    <property type="entry name" value="Ribulose bisphosphate carboxylase, large subunit, C-terminal domain"/>
    <property type="match status" value="1"/>
</dbReference>
<dbReference type="Gene3D" id="3.30.70.150">
    <property type="entry name" value="RuBisCO large subunit, N-terminal domain"/>
    <property type="match status" value="1"/>
</dbReference>
<dbReference type="HAMAP" id="MF_01338">
    <property type="entry name" value="RuBisCO_L_type1"/>
    <property type="match status" value="1"/>
</dbReference>
<dbReference type="InterPro" id="IPR033966">
    <property type="entry name" value="RuBisCO"/>
</dbReference>
<dbReference type="InterPro" id="IPR020878">
    <property type="entry name" value="RuBisCo_large_chain_AS"/>
</dbReference>
<dbReference type="InterPro" id="IPR000685">
    <property type="entry name" value="RuBisCO_lsu_C"/>
</dbReference>
<dbReference type="InterPro" id="IPR036376">
    <property type="entry name" value="RuBisCO_lsu_C_sf"/>
</dbReference>
<dbReference type="InterPro" id="IPR017443">
    <property type="entry name" value="RuBisCO_lsu_fd_N"/>
</dbReference>
<dbReference type="InterPro" id="IPR036422">
    <property type="entry name" value="RuBisCO_lsu_N_sf"/>
</dbReference>
<dbReference type="InterPro" id="IPR020888">
    <property type="entry name" value="RuBisCO_lsuI"/>
</dbReference>
<dbReference type="NCBIfam" id="NF003252">
    <property type="entry name" value="PRK04208.1"/>
    <property type="match status" value="1"/>
</dbReference>
<dbReference type="PANTHER" id="PTHR42704">
    <property type="entry name" value="RIBULOSE BISPHOSPHATE CARBOXYLASE"/>
    <property type="match status" value="1"/>
</dbReference>
<dbReference type="PANTHER" id="PTHR42704:SF15">
    <property type="entry name" value="RIBULOSE BISPHOSPHATE CARBOXYLASE LARGE CHAIN"/>
    <property type="match status" value="1"/>
</dbReference>
<dbReference type="Pfam" id="PF00016">
    <property type="entry name" value="RuBisCO_large"/>
    <property type="match status" value="1"/>
</dbReference>
<dbReference type="Pfam" id="PF02788">
    <property type="entry name" value="RuBisCO_large_N"/>
    <property type="match status" value="1"/>
</dbReference>
<dbReference type="SFLD" id="SFLDG01052">
    <property type="entry name" value="RuBisCO"/>
    <property type="match status" value="1"/>
</dbReference>
<dbReference type="SFLD" id="SFLDS00014">
    <property type="entry name" value="RuBisCO"/>
    <property type="match status" value="1"/>
</dbReference>
<dbReference type="SFLD" id="SFLDG00301">
    <property type="entry name" value="RuBisCO-like_proteins"/>
    <property type="match status" value="1"/>
</dbReference>
<dbReference type="SUPFAM" id="SSF51649">
    <property type="entry name" value="RuBisCo, C-terminal domain"/>
    <property type="match status" value="1"/>
</dbReference>
<dbReference type="SUPFAM" id="SSF54966">
    <property type="entry name" value="RuBisCO, large subunit, small (N-terminal) domain"/>
    <property type="match status" value="1"/>
</dbReference>
<dbReference type="PROSITE" id="PS00157">
    <property type="entry name" value="RUBISCO_LARGE"/>
    <property type="match status" value="1"/>
</dbReference>
<gene>
    <name evidence="1" type="primary">rbcL</name>
</gene>
<organism>
    <name type="scientific">Roridula gorgonias</name>
    <name type="common">South African fly bush</name>
    <dbReference type="NCBI Taxonomy" id="3772"/>
    <lineage>
        <taxon>Eukaryota</taxon>
        <taxon>Viridiplantae</taxon>
        <taxon>Streptophyta</taxon>
        <taxon>Embryophyta</taxon>
        <taxon>Tracheophyta</taxon>
        <taxon>Spermatophyta</taxon>
        <taxon>Magnoliopsida</taxon>
        <taxon>eudicotyledons</taxon>
        <taxon>Gunneridae</taxon>
        <taxon>Pentapetalae</taxon>
        <taxon>asterids</taxon>
        <taxon>Ericales</taxon>
        <taxon>Roridulaceae</taxon>
        <taxon>Roridula</taxon>
    </lineage>
</organism>
<reference key="1">
    <citation type="journal article" date="1992" name="Science">
        <title>Carnivorous plants: phylogeny and structural evolution.</title>
        <authorList>
            <person name="Albert V.A."/>
            <person name="Williams S.E."/>
            <person name="Chase M.W."/>
        </authorList>
    </citation>
    <scope>NUCLEOTIDE SEQUENCE [GENOMIC DNA]</scope>
</reference>
<keyword id="KW-0113">Calvin cycle</keyword>
<keyword id="KW-0120">Carbon dioxide fixation</keyword>
<keyword id="KW-0150">Chloroplast</keyword>
<keyword id="KW-1015">Disulfide bond</keyword>
<keyword id="KW-0456">Lyase</keyword>
<keyword id="KW-0460">Magnesium</keyword>
<keyword id="KW-0479">Metal-binding</keyword>
<keyword id="KW-0488">Methylation</keyword>
<keyword id="KW-0503">Monooxygenase</keyword>
<keyword id="KW-0560">Oxidoreductase</keyword>
<keyword id="KW-0601">Photorespiration</keyword>
<keyword id="KW-0602">Photosynthesis</keyword>
<keyword id="KW-0934">Plastid</keyword>
<feature type="chain" id="PRO_0000062582" description="Ribulose bisphosphate carboxylase large chain">
    <location>
        <begin position="1" status="less than"/>
        <end position="459" status="greater than"/>
    </location>
</feature>
<feature type="active site" description="Proton acceptor" evidence="1">
    <location>
        <position position="165"/>
    </location>
</feature>
<feature type="active site" description="Proton acceptor" evidence="1">
    <location>
        <position position="284"/>
    </location>
</feature>
<feature type="binding site" description="in homodimeric partner" evidence="1">
    <location>
        <position position="113"/>
    </location>
    <ligand>
        <name>substrate</name>
    </ligand>
</feature>
<feature type="binding site" evidence="1">
    <location>
        <position position="163"/>
    </location>
    <ligand>
        <name>substrate</name>
    </ligand>
</feature>
<feature type="binding site" evidence="1">
    <location>
        <position position="167"/>
    </location>
    <ligand>
        <name>substrate</name>
    </ligand>
</feature>
<feature type="binding site" description="via carbamate group" evidence="1">
    <location>
        <position position="191"/>
    </location>
    <ligand>
        <name>Mg(2+)</name>
        <dbReference type="ChEBI" id="CHEBI:18420"/>
    </ligand>
</feature>
<feature type="binding site" evidence="1">
    <location>
        <position position="193"/>
    </location>
    <ligand>
        <name>Mg(2+)</name>
        <dbReference type="ChEBI" id="CHEBI:18420"/>
    </ligand>
</feature>
<feature type="binding site" evidence="1">
    <location>
        <position position="194"/>
    </location>
    <ligand>
        <name>Mg(2+)</name>
        <dbReference type="ChEBI" id="CHEBI:18420"/>
    </ligand>
</feature>
<feature type="binding site" evidence="1">
    <location>
        <position position="285"/>
    </location>
    <ligand>
        <name>substrate</name>
    </ligand>
</feature>
<feature type="binding site" evidence="1">
    <location>
        <position position="317"/>
    </location>
    <ligand>
        <name>substrate</name>
    </ligand>
</feature>
<feature type="binding site" evidence="1">
    <location>
        <position position="369"/>
    </location>
    <ligand>
        <name>substrate</name>
    </ligand>
</feature>
<feature type="site" description="Transition state stabilizer" evidence="1">
    <location>
        <position position="324"/>
    </location>
</feature>
<feature type="modified residue" description="N6,N6,N6-trimethyllysine" evidence="1">
    <location>
        <position position="4"/>
    </location>
</feature>
<feature type="modified residue" description="N6-carboxylysine" evidence="1">
    <location>
        <position position="191"/>
    </location>
</feature>
<feature type="disulfide bond" description="Interchain; in linked form" evidence="1">
    <location>
        <position position="237"/>
    </location>
</feature>
<feature type="non-terminal residue">
    <location>
        <position position="1"/>
    </location>
</feature>
<feature type="non-terminal residue">
    <location>
        <position position="459"/>
    </location>
</feature>
<comment type="function">
    <text evidence="1">RuBisCO catalyzes two reactions: the carboxylation of D-ribulose 1,5-bisphosphate, the primary event in carbon dioxide fixation, as well as the oxidative fragmentation of the pentose substrate in the photorespiration process. Both reactions occur simultaneously and in competition at the same active site.</text>
</comment>
<comment type="catalytic activity">
    <reaction evidence="1">
        <text>2 (2R)-3-phosphoglycerate + 2 H(+) = D-ribulose 1,5-bisphosphate + CO2 + H2O</text>
        <dbReference type="Rhea" id="RHEA:23124"/>
        <dbReference type="ChEBI" id="CHEBI:15377"/>
        <dbReference type="ChEBI" id="CHEBI:15378"/>
        <dbReference type="ChEBI" id="CHEBI:16526"/>
        <dbReference type="ChEBI" id="CHEBI:57870"/>
        <dbReference type="ChEBI" id="CHEBI:58272"/>
        <dbReference type="EC" id="4.1.1.39"/>
    </reaction>
</comment>
<comment type="catalytic activity">
    <reaction evidence="1">
        <text>D-ribulose 1,5-bisphosphate + O2 = 2-phosphoglycolate + (2R)-3-phosphoglycerate + 2 H(+)</text>
        <dbReference type="Rhea" id="RHEA:36631"/>
        <dbReference type="ChEBI" id="CHEBI:15378"/>
        <dbReference type="ChEBI" id="CHEBI:15379"/>
        <dbReference type="ChEBI" id="CHEBI:57870"/>
        <dbReference type="ChEBI" id="CHEBI:58033"/>
        <dbReference type="ChEBI" id="CHEBI:58272"/>
    </reaction>
</comment>
<comment type="cofactor">
    <cofactor evidence="1">
        <name>Mg(2+)</name>
        <dbReference type="ChEBI" id="CHEBI:18420"/>
    </cofactor>
    <text evidence="1">Binds 1 Mg(2+) ion per subunit.</text>
</comment>
<comment type="subunit">
    <text evidence="1">Heterohexadecamer of 8 large chains and 8 small chains; disulfide-linked. The disulfide link is formed within the large subunit homodimers.</text>
</comment>
<comment type="subcellular location">
    <subcellularLocation>
        <location>Plastid</location>
        <location>Chloroplast</location>
    </subcellularLocation>
</comment>
<comment type="PTM">
    <text evidence="1">The disulfide bond which can form in the large chain dimeric partners within the hexadecamer appears to be associated with oxidative stress and protein turnover.</text>
</comment>
<comment type="miscellaneous">
    <text evidence="1">The basic functional RuBisCO is composed of a large chain homodimer in a 'head-to-tail' conformation. In form I RuBisCO this homodimer is arranged in a barrel-like tetramer with the small subunits forming a tetrameric 'cap' on each end of the 'barrel'.</text>
</comment>
<comment type="similarity">
    <text evidence="1">Belongs to the RuBisCO large chain family. Type I subfamily.</text>
</comment>
<geneLocation type="chloroplast"/>
<protein>
    <recommendedName>
        <fullName evidence="1">Ribulose bisphosphate carboxylase large chain</fullName>
        <shortName evidence="1">RuBisCO large subunit</shortName>
        <ecNumber evidence="1">4.1.1.39</ecNumber>
    </recommendedName>
</protein>